<proteinExistence type="inferred from homology"/>
<accession>Q60549</accession>
<gene>
    <name type="primary">GHRH</name>
    <name type="synonym">GRF</name>
</gene>
<reference key="1">
    <citation type="journal article" date="1994" name="DNA Seq.">
        <title>Molecular cloning of cDNA encoding the precursor for hamster hypothalamic growth hormone-releasing factor.</title>
        <authorList>
            <person name="Ono M."/>
            <person name="Miki N."/>
            <person name="Demura H."/>
            <person name="Tadokoro K."/>
            <person name="Nagafuchi S."/>
            <person name="Yamada M."/>
        </authorList>
    </citation>
    <scope>NUCLEOTIDE SEQUENCE [MRNA]</scope>
    <source>
        <tissue>Hypothalamus</tissue>
    </source>
</reference>
<dbReference type="EMBL" id="D23671">
    <property type="protein sequence ID" value="BAA04901.1"/>
    <property type="molecule type" value="mRNA"/>
</dbReference>
<dbReference type="RefSeq" id="NP_001268519.1">
    <property type="nucleotide sequence ID" value="NM_001281590.1"/>
</dbReference>
<dbReference type="SMR" id="Q60549"/>
<dbReference type="STRING" id="10036.ENSMAUP00000001917"/>
<dbReference type="GeneID" id="101834855"/>
<dbReference type="KEGG" id="maua:101834855"/>
<dbReference type="CTD" id="2691"/>
<dbReference type="eggNOG" id="ENOG502S2N6">
    <property type="taxonomic scope" value="Eukaryota"/>
</dbReference>
<dbReference type="OrthoDB" id="9931004at2759"/>
<dbReference type="Proteomes" id="UP000189706">
    <property type="component" value="Unplaced"/>
</dbReference>
<dbReference type="GO" id="GO:0005615">
    <property type="term" value="C:extracellular space"/>
    <property type="evidence" value="ECO:0007669"/>
    <property type="project" value="TreeGrafter"/>
</dbReference>
<dbReference type="GO" id="GO:0043204">
    <property type="term" value="C:perikaryon"/>
    <property type="evidence" value="ECO:0007669"/>
    <property type="project" value="TreeGrafter"/>
</dbReference>
<dbReference type="GO" id="GO:0043195">
    <property type="term" value="C:terminal bouton"/>
    <property type="evidence" value="ECO:0007669"/>
    <property type="project" value="TreeGrafter"/>
</dbReference>
<dbReference type="GO" id="GO:0016608">
    <property type="term" value="F:growth hormone-releasing hormone activity"/>
    <property type="evidence" value="ECO:0007669"/>
    <property type="project" value="TreeGrafter"/>
</dbReference>
<dbReference type="GO" id="GO:0031770">
    <property type="term" value="F:growth hormone-releasing hormone receptor binding"/>
    <property type="evidence" value="ECO:0007669"/>
    <property type="project" value="TreeGrafter"/>
</dbReference>
<dbReference type="GO" id="GO:0005184">
    <property type="term" value="F:neuropeptide hormone activity"/>
    <property type="evidence" value="ECO:0007669"/>
    <property type="project" value="InterPro"/>
</dbReference>
<dbReference type="GO" id="GO:0051428">
    <property type="term" value="F:peptide hormone receptor binding"/>
    <property type="evidence" value="ECO:0007669"/>
    <property type="project" value="TreeGrafter"/>
</dbReference>
<dbReference type="GO" id="GO:0007189">
    <property type="term" value="P:adenylate cyclase-activating G protein-coupled receptor signaling pathway"/>
    <property type="evidence" value="ECO:0007669"/>
    <property type="project" value="TreeGrafter"/>
</dbReference>
<dbReference type="GO" id="GO:0030252">
    <property type="term" value="P:growth hormone secretion"/>
    <property type="evidence" value="ECO:0007669"/>
    <property type="project" value="TreeGrafter"/>
</dbReference>
<dbReference type="GO" id="GO:0032880">
    <property type="term" value="P:regulation of protein localization"/>
    <property type="evidence" value="ECO:0007669"/>
    <property type="project" value="TreeGrafter"/>
</dbReference>
<dbReference type="InterPro" id="IPR000532">
    <property type="entry name" value="Glucagon_GIP_secretin_VIP"/>
</dbReference>
<dbReference type="InterPro" id="IPR046963">
    <property type="entry name" value="VIP/GHRH-like"/>
</dbReference>
<dbReference type="PANTHER" id="PTHR11213">
    <property type="entry name" value="GLUCAGON-FAMILY NEUROPEPTIDE"/>
    <property type="match status" value="1"/>
</dbReference>
<dbReference type="PANTHER" id="PTHR11213:SF6">
    <property type="entry name" value="SOMATOLIBERIN"/>
    <property type="match status" value="1"/>
</dbReference>
<dbReference type="Pfam" id="PF00123">
    <property type="entry name" value="Hormone_2"/>
    <property type="match status" value="1"/>
</dbReference>
<dbReference type="SMART" id="SM00070">
    <property type="entry name" value="GLUCA"/>
    <property type="match status" value="1"/>
</dbReference>
<dbReference type="PROSITE" id="PS00260">
    <property type="entry name" value="GLUCAGON"/>
    <property type="match status" value="1"/>
</dbReference>
<protein>
    <recommendedName>
        <fullName>Somatoliberin</fullName>
    </recommendedName>
    <alternativeName>
        <fullName>Growth hormone-releasing factor</fullName>
        <shortName>GRF</shortName>
    </alternativeName>
    <alternativeName>
        <fullName>Growth hormone-releasing hormone</fullName>
        <shortName>GHRH</shortName>
    </alternativeName>
</protein>
<sequence length="107" mass="12298">MPLWVFFVILTLTNGSHCSPSPSLPFRIRRYADAIFTSSYRKVLGQLSARKLLQDIMSRQQGERNQEQGPRVRLGRQVDSMWADHRQMSLESLLAALLQKHSRDSQG</sequence>
<keyword id="KW-0027">Amidation</keyword>
<keyword id="KW-0165">Cleavage on pair of basic residues</keyword>
<keyword id="KW-1185">Reference proteome</keyword>
<keyword id="KW-0964">Secreted</keyword>
<keyword id="KW-0732">Signal</keyword>
<comment type="function">
    <text>GRF is released by the hypothalamus and acts on the adenohypophyse to stimulate the secretion of growth hormone.</text>
</comment>
<comment type="subcellular location">
    <subcellularLocation>
        <location>Secreted</location>
    </subcellularLocation>
</comment>
<comment type="similarity">
    <text evidence="3">Belongs to the glucagon family.</text>
</comment>
<feature type="signal peptide" evidence="2">
    <location>
        <begin position="1"/>
        <end position="19"/>
    </location>
</feature>
<feature type="propeptide" id="PRO_0000011441">
    <location>
        <begin position="20"/>
        <end position="30"/>
    </location>
</feature>
<feature type="peptide" id="PRO_0000011442" description="Somatoliberin">
    <location>
        <begin position="31"/>
        <end position="74"/>
    </location>
</feature>
<feature type="propeptide" id="PRO_0000011443">
    <location>
        <begin position="77"/>
        <end position="107"/>
    </location>
</feature>
<feature type="modified residue" description="Leucine amide" evidence="1">
    <location>
        <position position="74"/>
    </location>
</feature>
<name>SLIB_MESAU</name>
<evidence type="ECO:0000250" key="1"/>
<evidence type="ECO:0000255" key="2"/>
<evidence type="ECO:0000305" key="3"/>
<organism>
    <name type="scientific">Mesocricetus auratus</name>
    <name type="common">Golden hamster</name>
    <dbReference type="NCBI Taxonomy" id="10036"/>
    <lineage>
        <taxon>Eukaryota</taxon>
        <taxon>Metazoa</taxon>
        <taxon>Chordata</taxon>
        <taxon>Craniata</taxon>
        <taxon>Vertebrata</taxon>
        <taxon>Euteleostomi</taxon>
        <taxon>Mammalia</taxon>
        <taxon>Eutheria</taxon>
        <taxon>Euarchontoglires</taxon>
        <taxon>Glires</taxon>
        <taxon>Rodentia</taxon>
        <taxon>Myomorpha</taxon>
        <taxon>Muroidea</taxon>
        <taxon>Cricetidae</taxon>
        <taxon>Cricetinae</taxon>
        <taxon>Mesocricetus</taxon>
    </lineage>
</organism>